<feature type="chain" id="PRO_1000093482" description="Peptide chain release factor 1">
    <location>
        <begin position="1"/>
        <end position="359"/>
    </location>
</feature>
<feature type="modified residue" description="N5-methylglutamine" evidence="1">
    <location>
        <position position="233"/>
    </location>
</feature>
<protein>
    <recommendedName>
        <fullName evidence="1">Peptide chain release factor 1</fullName>
        <shortName evidence="1">RF-1</shortName>
    </recommendedName>
</protein>
<gene>
    <name evidence="1" type="primary">prfA</name>
    <name type="ordered locus">OTT_0012</name>
</gene>
<organism>
    <name type="scientific">Orientia tsutsugamushi (strain Ikeda)</name>
    <name type="common">Rickettsia tsutsugamushi</name>
    <dbReference type="NCBI Taxonomy" id="334380"/>
    <lineage>
        <taxon>Bacteria</taxon>
        <taxon>Pseudomonadati</taxon>
        <taxon>Pseudomonadota</taxon>
        <taxon>Alphaproteobacteria</taxon>
        <taxon>Rickettsiales</taxon>
        <taxon>Rickettsiaceae</taxon>
        <taxon>Rickettsieae</taxon>
        <taxon>Orientia</taxon>
    </lineage>
</organism>
<comment type="function">
    <text evidence="1">Peptide chain release factor 1 directs the termination of translation in response to the peptide chain termination codons UAG and UAA.</text>
</comment>
<comment type="subcellular location">
    <subcellularLocation>
        <location evidence="1">Cytoplasm</location>
    </subcellularLocation>
</comment>
<comment type="PTM">
    <text evidence="1">Methylated by PrmC. Methylation increases the termination efficiency of RF1.</text>
</comment>
<comment type="similarity">
    <text evidence="1">Belongs to the prokaryotic/mitochondrial release factor family.</text>
</comment>
<reference key="1">
    <citation type="journal article" date="2008" name="DNA Res.">
        <title>The whole-genome sequencing of the obligate intracellular bacterium Orientia tsutsugamushi revealed massive gene amplification during reductive genome evolution.</title>
        <authorList>
            <person name="Nakayama K."/>
            <person name="Yamashita A."/>
            <person name="Kurokawa K."/>
            <person name="Morimoto T."/>
            <person name="Ogawa M."/>
            <person name="Fukuhara M."/>
            <person name="Urakami H."/>
            <person name="Ohnishi M."/>
            <person name="Uchiyama I."/>
            <person name="Ogura Y."/>
            <person name="Ooka T."/>
            <person name="Oshima K."/>
            <person name="Tamura A."/>
            <person name="Hattori M."/>
            <person name="Hayashi T."/>
        </authorList>
    </citation>
    <scope>NUCLEOTIDE SEQUENCE [LARGE SCALE GENOMIC DNA]</scope>
    <source>
        <strain>Ikeda</strain>
    </source>
</reference>
<evidence type="ECO:0000255" key="1">
    <source>
        <dbReference type="HAMAP-Rule" id="MF_00093"/>
    </source>
</evidence>
<accession>B3CQD1</accession>
<dbReference type="EMBL" id="AP008981">
    <property type="protein sequence ID" value="BAG39470.1"/>
    <property type="molecule type" value="Genomic_DNA"/>
</dbReference>
<dbReference type="RefSeq" id="WP_012460736.1">
    <property type="nucleotide sequence ID" value="NC_010793.1"/>
</dbReference>
<dbReference type="SMR" id="B3CQD1"/>
<dbReference type="KEGG" id="ott:OTT_0012"/>
<dbReference type="HOGENOM" id="CLU_036856_0_1_5"/>
<dbReference type="OrthoDB" id="9806673at2"/>
<dbReference type="Proteomes" id="UP000001033">
    <property type="component" value="Chromosome"/>
</dbReference>
<dbReference type="GO" id="GO:0005737">
    <property type="term" value="C:cytoplasm"/>
    <property type="evidence" value="ECO:0007669"/>
    <property type="project" value="UniProtKB-SubCell"/>
</dbReference>
<dbReference type="GO" id="GO:0016149">
    <property type="term" value="F:translation release factor activity, codon specific"/>
    <property type="evidence" value="ECO:0007669"/>
    <property type="project" value="UniProtKB-UniRule"/>
</dbReference>
<dbReference type="FunFam" id="3.30.160.20:FF:000004">
    <property type="entry name" value="Peptide chain release factor 1"/>
    <property type="match status" value="1"/>
</dbReference>
<dbReference type="FunFam" id="3.30.70.1660:FF:000002">
    <property type="entry name" value="Peptide chain release factor 1"/>
    <property type="match status" value="1"/>
</dbReference>
<dbReference type="FunFam" id="3.30.70.1660:FF:000004">
    <property type="entry name" value="Peptide chain release factor 1"/>
    <property type="match status" value="1"/>
</dbReference>
<dbReference type="Gene3D" id="3.30.160.20">
    <property type="match status" value="1"/>
</dbReference>
<dbReference type="Gene3D" id="3.30.70.1660">
    <property type="match status" value="1"/>
</dbReference>
<dbReference type="Gene3D" id="6.10.140.1950">
    <property type="match status" value="1"/>
</dbReference>
<dbReference type="HAMAP" id="MF_00093">
    <property type="entry name" value="Rel_fac_1"/>
    <property type="match status" value="1"/>
</dbReference>
<dbReference type="InterPro" id="IPR005139">
    <property type="entry name" value="PCRF"/>
</dbReference>
<dbReference type="InterPro" id="IPR000352">
    <property type="entry name" value="Pep_chain_release_fac_I"/>
</dbReference>
<dbReference type="InterPro" id="IPR045853">
    <property type="entry name" value="Pep_chain_release_fac_I_sf"/>
</dbReference>
<dbReference type="InterPro" id="IPR050057">
    <property type="entry name" value="Prokaryotic/Mito_RF"/>
</dbReference>
<dbReference type="InterPro" id="IPR004373">
    <property type="entry name" value="RF-1"/>
</dbReference>
<dbReference type="NCBIfam" id="TIGR00019">
    <property type="entry name" value="prfA"/>
    <property type="match status" value="1"/>
</dbReference>
<dbReference type="NCBIfam" id="NF001859">
    <property type="entry name" value="PRK00591.1"/>
    <property type="match status" value="1"/>
</dbReference>
<dbReference type="PANTHER" id="PTHR43804">
    <property type="entry name" value="LD18447P"/>
    <property type="match status" value="1"/>
</dbReference>
<dbReference type="PANTHER" id="PTHR43804:SF7">
    <property type="entry name" value="LD18447P"/>
    <property type="match status" value="1"/>
</dbReference>
<dbReference type="Pfam" id="PF03462">
    <property type="entry name" value="PCRF"/>
    <property type="match status" value="1"/>
</dbReference>
<dbReference type="Pfam" id="PF00472">
    <property type="entry name" value="RF-1"/>
    <property type="match status" value="1"/>
</dbReference>
<dbReference type="SMART" id="SM00937">
    <property type="entry name" value="PCRF"/>
    <property type="match status" value="1"/>
</dbReference>
<dbReference type="SUPFAM" id="SSF75620">
    <property type="entry name" value="Release factor"/>
    <property type="match status" value="1"/>
</dbReference>
<dbReference type="PROSITE" id="PS00745">
    <property type="entry name" value="RF_PROK_I"/>
    <property type="match status" value="1"/>
</dbReference>
<sequence length="359" mass="40678">MSFTVHLNKILQKYQDLEADLNGGKLDNKELALISKEYSNLKPIIEKLNRYLKAHENIKYLQQVIDTEQDLELKSIAEVELYDTLNYLPKLEEEVKISLLPKESDDHKNAIIEVRAGTGGDEAALFAASLFQMYNRYAERKKWKFELLSISDTEIGGYKEASALISGNGVFANLKFESGVHRVQRIPKTESNGRIHTSAATVVVLPEAEEVDVKIDAKDLKIDTYRASGAGGQHVNTTDSAVRITHIPTGVVVSQQDEKSQHKNKAKAMKILYARLYDLEKQKSQQEQAMSRKVQVGTGDRSERIRTYNYPQGRVTDHRINLTLYKIEEIIQEGKLDEIINNLISENEAKKIADSNIQF</sequence>
<proteinExistence type="inferred from homology"/>
<name>RF1_ORITI</name>
<keyword id="KW-0963">Cytoplasm</keyword>
<keyword id="KW-0488">Methylation</keyword>
<keyword id="KW-0648">Protein biosynthesis</keyword>